<name>PYRF_PHOV8</name>
<organism>
    <name type="scientific">Phocaeicola vulgatus (strain ATCC 8482 / DSM 1447 / JCM 5826 / CCUG 4940 / NBRC 14291 / NCTC 11154)</name>
    <name type="common">Bacteroides vulgatus</name>
    <dbReference type="NCBI Taxonomy" id="435590"/>
    <lineage>
        <taxon>Bacteria</taxon>
        <taxon>Pseudomonadati</taxon>
        <taxon>Bacteroidota</taxon>
        <taxon>Bacteroidia</taxon>
        <taxon>Bacteroidales</taxon>
        <taxon>Bacteroidaceae</taxon>
        <taxon>Phocaeicola</taxon>
    </lineage>
</organism>
<keyword id="KW-0210">Decarboxylase</keyword>
<keyword id="KW-0456">Lyase</keyword>
<keyword id="KW-0665">Pyrimidine biosynthesis</keyword>
<evidence type="ECO:0000255" key="1">
    <source>
        <dbReference type="HAMAP-Rule" id="MF_01215"/>
    </source>
</evidence>
<gene>
    <name evidence="1" type="primary">pyrF</name>
    <name type="ordered locus">BVU_0095</name>
</gene>
<feature type="chain" id="PRO_1000138946" description="Orotidine 5'-phosphate decarboxylase">
    <location>
        <begin position="1"/>
        <end position="272"/>
    </location>
</feature>
<feature type="active site" description="Proton donor" evidence="1">
    <location>
        <position position="96"/>
    </location>
</feature>
<reference key="1">
    <citation type="journal article" date="2007" name="PLoS Biol.">
        <title>Evolution of symbiotic bacteria in the distal human intestine.</title>
        <authorList>
            <person name="Xu J."/>
            <person name="Mahowald M.A."/>
            <person name="Ley R.E."/>
            <person name="Lozupone C.A."/>
            <person name="Hamady M."/>
            <person name="Martens E.C."/>
            <person name="Henrissat B."/>
            <person name="Coutinho P.M."/>
            <person name="Minx P."/>
            <person name="Latreille P."/>
            <person name="Cordum H."/>
            <person name="Van Brunt A."/>
            <person name="Kim K."/>
            <person name="Fulton R.S."/>
            <person name="Fulton L.A."/>
            <person name="Clifton S.W."/>
            <person name="Wilson R.K."/>
            <person name="Knight R.D."/>
            <person name="Gordon J.I."/>
        </authorList>
    </citation>
    <scope>NUCLEOTIDE SEQUENCE [LARGE SCALE GENOMIC DNA]</scope>
    <source>
        <strain>ATCC 8482 / DSM 1447 / JCM 5826 / CCUG 4940 / NBRC 14291 / NCTC 11154</strain>
    </source>
</reference>
<sequence length="272" mass="30600">MNKQQLFENIQKKKSFLCVGLDTDIKKIPEHLLKEEDPIFAFNKAIIDATAPYCIAYKPNLAFYESMGVKGWIAFEKTVSYIKENYPDQFIIADAKRGDIGNTSAMYARTFFEELDIDSVTVAPYMGEDSVTPFLSYEGKWVILLALTSNKGSHDFQLTEDTNGERLFEKVLRKSQEWANDENMMYVVGATQGRAFEDIRKIVPNHFLLVPGIGAQGGSLEEVCKYGMNSTCGLIVNSSRAIIYADKTENFATVAGQEAQKVQAQMEKIMCQ</sequence>
<accession>A6KWL1</accession>
<dbReference type="EC" id="4.1.1.23" evidence="1"/>
<dbReference type="EMBL" id="CP000139">
    <property type="protein sequence ID" value="ABR37825.1"/>
    <property type="molecule type" value="Genomic_DNA"/>
</dbReference>
<dbReference type="RefSeq" id="WP_005843024.1">
    <property type="nucleotide sequence ID" value="NZ_JANSWM010000057.1"/>
</dbReference>
<dbReference type="SMR" id="A6KWL1"/>
<dbReference type="STRING" id="435590.BVU_0095"/>
<dbReference type="PaxDb" id="435590-BVU_0095"/>
<dbReference type="GeneID" id="93448333"/>
<dbReference type="KEGG" id="bvu:BVU_0095"/>
<dbReference type="eggNOG" id="COG0284">
    <property type="taxonomic scope" value="Bacteria"/>
</dbReference>
<dbReference type="HOGENOM" id="CLU_060704_1_0_10"/>
<dbReference type="BioCyc" id="BVUL435590:G1G59-101-MONOMER"/>
<dbReference type="UniPathway" id="UPA00070">
    <property type="reaction ID" value="UER00120"/>
</dbReference>
<dbReference type="Proteomes" id="UP000002861">
    <property type="component" value="Chromosome"/>
</dbReference>
<dbReference type="GO" id="GO:0004590">
    <property type="term" value="F:orotidine-5'-phosphate decarboxylase activity"/>
    <property type="evidence" value="ECO:0007669"/>
    <property type="project" value="UniProtKB-UniRule"/>
</dbReference>
<dbReference type="GO" id="GO:0006207">
    <property type="term" value="P:'de novo' pyrimidine nucleobase biosynthetic process"/>
    <property type="evidence" value="ECO:0007669"/>
    <property type="project" value="InterPro"/>
</dbReference>
<dbReference type="GO" id="GO:0044205">
    <property type="term" value="P:'de novo' UMP biosynthetic process"/>
    <property type="evidence" value="ECO:0007669"/>
    <property type="project" value="UniProtKB-UniRule"/>
</dbReference>
<dbReference type="CDD" id="cd04725">
    <property type="entry name" value="OMP_decarboxylase_like"/>
    <property type="match status" value="1"/>
</dbReference>
<dbReference type="FunFam" id="3.20.20.70:FF:000157">
    <property type="entry name" value="Orotidine 5'-phosphate decarboxylase"/>
    <property type="match status" value="1"/>
</dbReference>
<dbReference type="Gene3D" id="3.20.20.70">
    <property type="entry name" value="Aldolase class I"/>
    <property type="match status" value="1"/>
</dbReference>
<dbReference type="HAMAP" id="MF_01215">
    <property type="entry name" value="OMPdecase_type2"/>
    <property type="match status" value="1"/>
</dbReference>
<dbReference type="InterPro" id="IPR013785">
    <property type="entry name" value="Aldolase_TIM"/>
</dbReference>
<dbReference type="InterPro" id="IPR011995">
    <property type="entry name" value="OMPdecase_type-2"/>
</dbReference>
<dbReference type="InterPro" id="IPR001754">
    <property type="entry name" value="OMPdeCOase_dom"/>
</dbReference>
<dbReference type="InterPro" id="IPR011060">
    <property type="entry name" value="RibuloseP-bd_barrel"/>
</dbReference>
<dbReference type="NCBIfam" id="TIGR02127">
    <property type="entry name" value="pyrF_sub2"/>
    <property type="match status" value="1"/>
</dbReference>
<dbReference type="PANTHER" id="PTHR43375">
    <property type="entry name" value="OROTIDINE 5'-PHOSPHATE DECARBOXYLASE"/>
    <property type="match status" value="1"/>
</dbReference>
<dbReference type="PANTHER" id="PTHR43375:SF1">
    <property type="entry name" value="OROTIDINE 5'-PHOSPHATE DECARBOXYLASE"/>
    <property type="match status" value="1"/>
</dbReference>
<dbReference type="Pfam" id="PF00215">
    <property type="entry name" value="OMPdecase"/>
    <property type="match status" value="1"/>
</dbReference>
<dbReference type="SMART" id="SM00934">
    <property type="entry name" value="OMPdecase"/>
    <property type="match status" value="1"/>
</dbReference>
<dbReference type="SUPFAM" id="SSF51366">
    <property type="entry name" value="Ribulose-phoshate binding barrel"/>
    <property type="match status" value="1"/>
</dbReference>
<proteinExistence type="inferred from homology"/>
<protein>
    <recommendedName>
        <fullName evidence="1">Orotidine 5'-phosphate decarboxylase</fullName>
        <ecNumber evidence="1">4.1.1.23</ecNumber>
    </recommendedName>
    <alternativeName>
        <fullName evidence="1">OMP decarboxylase</fullName>
        <shortName evidence="1">OMPDCase</shortName>
        <shortName evidence="1">OMPdecase</shortName>
    </alternativeName>
</protein>
<comment type="catalytic activity">
    <reaction evidence="1">
        <text>orotidine 5'-phosphate + H(+) = UMP + CO2</text>
        <dbReference type="Rhea" id="RHEA:11596"/>
        <dbReference type="ChEBI" id="CHEBI:15378"/>
        <dbReference type="ChEBI" id="CHEBI:16526"/>
        <dbReference type="ChEBI" id="CHEBI:57538"/>
        <dbReference type="ChEBI" id="CHEBI:57865"/>
        <dbReference type="EC" id="4.1.1.23"/>
    </reaction>
</comment>
<comment type="pathway">
    <text evidence="1">Pyrimidine metabolism; UMP biosynthesis via de novo pathway; UMP from orotate: step 2/2.</text>
</comment>
<comment type="similarity">
    <text evidence="1">Belongs to the OMP decarboxylase family. Type 2 subfamily.</text>
</comment>